<evidence type="ECO:0000250" key="1">
    <source>
        <dbReference type="UniProtKB" id="Q47149"/>
    </source>
</evidence>
<evidence type="ECO:0000269" key="2">
    <source>
    </source>
</evidence>
<evidence type="ECO:0000305" key="3"/>
<evidence type="ECO:0007744" key="4">
    <source>
        <dbReference type="PDB" id="4ML0"/>
    </source>
</evidence>
<evidence type="ECO:0007744" key="5">
    <source>
        <dbReference type="PDB" id="4ML2"/>
    </source>
</evidence>
<evidence type="ECO:0007744" key="6">
    <source>
        <dbReference type="PDB" id="4MMG"/>
    </source>
</evidence>
<evidence type="ECO:0007744" key="7">
    <source>
        <dbReference type="PDB" id="4MMJ"/>
    </source>
</evidence>
<evidence type="ECO:0007829" key="8">
    <source>
        <dbReference type="PDB" id="4MMJ"/>
    </source>
</evidence>
<keyword id="KW-0002">3D-structure</keyword>
<keyword id="KW-0238">DNA-binding</keyword>
<keyword id="KW-0255">Endonuclease</keyword>
<keyword id="KW-0378">Hydrolase</keyword>
<keyword id="KW-0540">Nuclease</keyword>
<keyword id="KW-0678">Repressor</keyword>
<keyword id="KW-0694">RNA-binding</keyword>
<keyword id="KW-1277">Toxin-antitoxin system</keyword>
<keyword id="KW-0804">Transcription</keyword>
<keyword id="KW-0805">Transcription regulation</keyword>
<gene>
    <name type="primary">yafQ</name>
    <name type="ordered locus">ECBD_3397</name>
</gene>
<dbReference type="EC" id="3.1.-.-"/>
<dbReference type="EMBL" id="CP001665">
    <property type="protein sequence ID" value="ACT30397.1"/>
    <property type="molecule type" value="Genomic_DNA"/>
</dbReference>
<dbReference type="RefSeq" id="WP_000615981.1">
    <property type="nucleotide sequence ID" value="NZ_JADXDS010000051.1"/>
</dbReference>
<dbReference type="PDB" id="4ML0">
    <property type="method" value="X-ray"/>
    <property type="resolution" value="2.10 A"/>
    <property type="chains" value="B/D/F/H/J/L/N/P=1-92"/>
</dbReference>
<dbReference type="PDB" id="4ML2">
    <property type="method" value="X-ray"/>
    <property type="resolution" value="1.50 A"/>
    <property type="chains" value="A=1-92"/>
</dbReference>
<dbReference type="PDB" id="4MMG">
    <property type="method" value="X-ray"/>
    <property type="resolution" value="1.50 A"/>
    <property type="chains" value="A/B=1-92"/>
</dbReference>
<dbReference type="PDB" id="4MMJ">
    <property type="method" value="X-ray"/>
    <property type="resolution" value="1.80 A"/>
    <property type="chains" value="A=1-92"/>
</dbReference>
<dbReference type="PDBsum" id="4ML0"/>
<dbReference type="PDBsum" id="4ML2"/>
<dbReference type="PDBsum" id="4MMG"/>
<dbReference type="PDBsum" id="4MMJ"/>
<dbReference type="SMR" id="A0A140NAP5"/>
<dbReference type="KEGG" id="ebd:ECBD_3397"/>
<dbReference type="KEGG" id="ebe:B21_00224"/>
<dbReference type="KEGG" id="ebl:ECD_00220"/>
<dbReference type="PATRIC" id="fig|469008.15.peg.224"/>
<dbReference type="eggNOG" id="COG3041">
    <property type="taxonomic scope" value="Bacteria"/>
</dbReference>
<dbReference type="HOGENOM" id="CLU_161929_4_1_6"/>
<dbReference type="EvolutionaryTrace" id="A0A140NAP5"/>
<dbReference type="GO" id="GO:0003677">
    <property type="term" value="F:DNA binding"/>
    <property type="evidence" value="ECO:0007669"/>
    <property type="project" value="UniProtKB-KW"/>
</dbReference>
<dbReference type="GO" id="GO:0003723">
    <property type="term" value="F:RNA binding"/>
    <property type="evidence" value="ECO:0007669"/>
    <property type="project" value="UniProtKB-KW"/>
</dbReference>
<dbReference type="GO" id="GO:0004521">
    <property type="term" value="F:RNA endonuclease activity"/>
    <property type="evidence" value="ECO:0007669"/>
    <property type="project" value="TreeGrafter"/>
</dbReference>
<dbReference type="GO" id="GO:0006402">
    <property type="term" value="P:mRNA catabolic process"/>
    <property type="evidence" value="ECO:0007669"/>
    <property type="project" value="TreeGrafter"/>
</dbReference>
<dbReference type="GO" id="GO:0006415">
    <property type="term" value="P:translational termination"/>
    <property type="evidence" value="ECO:0007669"/>
    <property type="project" value="TreeGrafter"/>
</dbReference>
<dbReference type="FunFam" id="3.30.2310.20:FF:000003">
    <property type="entry name" value="Type II toxin-antitoxin system YafQ family toxin"/>
    <property type="match status" value="1"/>
</dbReference>
<dbReference type="Gene3D" id="3.30.2310.20">
    <property type="entry name" value="RelE-like"/>
    <property type="match status" value="1"/>
</dbReference>
<dbReference type="InterPro" id="IPR007712">
    <property type="entry name" value="RelE/ParE_toxin"/>
</dbReference>
<dbReference type="InterPro" id="IPR035093">
    <property type="entry name" value="RelE/ParE_toxin_dom_sf"/>
</dbReference>
<dbReference type="InterPro" id="IPR004386">
    <property type="entry name" value="Toxin_YafQ-like"/>
</dbReference>
<dbReference type="NCBIfam" id="TIGR02385">
    <property type="entry name" value="RelE_StbE"/>
    <property type="match status" value="1"/>
</dbReference>
<dbReference type="NCBIfam" id="TIGR00053">
    <property type="entry name" value="YafQ family addiction module toxin"/>
    <property type="match status" value="1"/>
</dbReference>
<dbReference type="PANTHER" id="PTHR40588">
    <property type="entry name" value="MRNA INTERFERASE TOXIN YAFQ"/>
    <property type="match status" value="1"/>
</dbReference>
<dbReference type="PANTHER" id="PTHR40588:SF1">
    <property type="entry name" value="MRNA INTERFERASE TOXIN YAFQ"/>
    <property type="match status" value="1"/>
</dbReference>
<dbReference type="Pfam" id="PF15738">
    <property type="entry name" value="YafQ_toxin"/>
    <property type="match status" value="1"/>
</dbReference>
<dbReference type="PIRSF" id="PIRSF006156">
    <property type="entry name" value="YafQ"/>
    <property type="match status" value="1"/>
</dbReference>
<dbReference type="SUPFAM" id="SSF143011">
    <property type="entry name" value="RelE-like"/>
    <property type="match status" value="1"/>
</dbReference>
<sequence length="92" mass="10861">MIQRDIEYSGQFSKDVKLAQKRHKDMNKLKYLMTLLINNTLPLPAVYKDHPLQSSWKGYRDAHVEPDWILIYKLTDKLLRFERTGTHAALFG</sequence>
<accession>A0A140NAP5</accession>
<name>YAFQ_ECOBD</name>
<protein>
    <recommendedName>
        <fullName>mRNA interferase toxin YafQ</fullName>
        <ecNumber>3.1.-.-</ecNumber>
    </recommendedName>
    <alternativeName>
        <fullName>Endoribonuclease YafQ</fullName>
    </alternativeName>
    <alternativeName>
        <fullName>Toxin YafQ</fullName>
    </alternativeName>
</protein>
<proteinExistence type="evidence at protein level"/>
<organism>
    <name type="scientific">Escherichia coli (strain B / BL21-DE3)</name>
    <dbReference type="NCBI Taxonomy" id="469008"/>
    <lineage>
        <taxon>Bacteria</taxon>
        <taxon>Pseudomonadati</taxon>
        <taxon>Pseudomonadota</taxon>
        <taxon>Gammaproteobacteria</taxon>
        <taxon>Enterobacterales</taxon>
        <taxon>Enterobacteriaceae</taxon>
        <taxon>Escherichia</taxon>
    </lineage>
</organism>
<reference key="1">
    <citation type="submission" date="2009-07" db="EMBL/GenBank/DDBJ databases">
        <title>Complete sequence of Escherichia coli BL21(DE3).</title>
        <authorList>
            <person name="Lucas S."/>
            <person name="Copeland A."/>
            <person name="Lapidus A."/>
            <person name="Glavina del Rio T."/>
            <person name="Dalin E."/>
            <person name="Tice H."/>
            <person name="Bruce D."/>
            <person name="Goodwin L."/>
            <person name="Pitluck S."/>
            <person name="LaButti K.M."/>
            <person name="Clum A."/>
            <person name="Larimer F."/>
            <person name="Land M."/>
            <person name="Hauser L."/>
            <person name="Kyrpides N."/>
            <person name="Anderson I."/>
            <person name="Sorek R."/>
            <person name="Rubin E."/>
        </authorList>
    </citation>
    <scope>NUCLEOTIDE SEQUENCE [LARGE SCALE GENOMIC DNA]</scope>
    <source>
        <strain>B / BL21-DE3</strain>
    </source>
</reference>
<reference evidence="4 5 6 7" key="2">
    <citation type="journal article" date="2014" name="J. Biol. Chem.">
        <title>Structural and functional characterization of Escherichia coli toxin-antitoxin complex DinJ-YafQ.</title>
        <authorList>
            <person name="Liang Y."/>
            <person name="Gao Z."/>
            <person name="Wang F."/>
            <person name="Zhang Y."/>
            <person name="Dong Y."/>
            <person name="Liu Q."/>
        </authorList>
    </citation>
    <scope>X-RAY CRYSTALLOGRAPHY (1.50 ANGSTROMS) ALONE AND IN COMPLEX WITH DINJ</scope>
    <scope>FUNCTION AS AN RNASE</scope>
    <scope>SUBUNIT</scope>
    <scope>PROBABLE DNA-BINDING</scope>
    <scope>MUTAGENESIS OF HIS-23; LYS-48 AND HIS-87</scope>
    <source>
        <strain>B / BL21-DE3</strain>
    </source>
</reference>
<feature type="chain" id="PRO_0000440935" description="mRNA interferase toxin YafQ">
    <location>
        <begin position="1"/>
        <end position="92"/>
    </location>
</feature>
<feature type="active site" description="Proton donor" evidence="3">
    <location>
        <position position="87"/>
    </location>
</feature>
<feature type="mutagenesis site" description="Moderate decrease in RNAase activity." evidence="2">
    <original>H</original>
    <variation>Q</variation>
    <location>
        <position position="23"/>
    </location>
</feature>
<feature type="mutagenesis site" description="Moderate decrease in RNAase activity." evidence="2">
    <original>K</original>
    <variation>A</variation>
    <location>
        <position position="48"/>
    </location>
</feature>
<feature type="mutagenesis site" description="No RNAase activity, still forms a complex with DinJ." evidence="2">
    <original>H</original>
    <variation>Q</variation>
    <location>
        <position position="87"/>
    </location>
</feature>
<feature type="strand" evidence="8">
    <location>
        <begin position="5"/>
        <end position="8"/>
    </location>
</feature>
<feature type="helix" evidence="8">
    <location>
        <begin position="10"/>
        <end position="21"/>
    </location>
</feature>
<feature type="helix" evidence="8">
    <location>
        <begin position="26"/>
        <end position="37"/>
    </location>
</feature>
<feature type="helix" evidence="8">
    <location>
        <begin position="45"/>
        <end position="47"/>
    </location>
</feature>
<feature type="helix" evidence="8">
    <location>
        <begin position="54"/>
        <end position="56"/>
    </location>
</feature>
<feature type="strand" evidence="8">
    <location>
        <begin position="60"/>
        <end position="65"/>
    </location>
</feature>
<feature type="strand" evidence="8">
    <location>
        <begin position="68"/>
        <end position="74"/>
    </location>
</feature>
<feature type="strand" evidence="8">
    <location>
        <begin position="76"/>
        <end position="85"/>
    </location>
</feature>
<feature type="helix" evidence="8">
    <location>
        <begin position="87"/>
        <end position="91"/>
    </location>
</feature>
<comment type="function">
    <text evidence="1 2">Toxic component of a type II toxin-antitoxin (TA) system (PubMed:24923448). A sequence-specific mRNA endoribonuclease that inhibits translation elongation and induces bacterial stasis (Probable). Cleavage occurs between the second and third residue of the Lys codon followed by a G or A (5'AAA(G/A)3'), is reading-frame dependent and occurs within the 5' end of most mRNAs (By similarity). Ribosome-binding confers the sequence specificity and reading frame-dependence (By similarity). The YafQ-DinJ heterotetramer binds the consensus sequence 5'-TTTGAGCTACA-3' in the dinJ promoter; DinJ also binds DNA but not as well as the YafQ-DinJ complex (PubMed:24923448).</text>
</comment>
<comment type="subunit">
    <text evidence="2">Monomer in solution, forms a heterotetramer with antitoxin DinJ, with 2 YafQ-DinJ dimers associated via the N-terminus of the DinJ antitoxins (YafQ-(DinJ)2-YafQ) (PubMed:24923448).</text>
</comment>
<comment type="similarity">
    <text evidence="3">Belongs to the RelE toxin family. YafQ subfamily.</text>
</comment>